<proteinExistence type="inferred from homology"/>
<evidence type="ECO:0000255" key="1">
    <source>
        <dbReference type="HAMAP-Rule" id="MF_04074"/>
    </source>
</evidence>
<evidence type="ECO:0000256" key="2">
    <source>
        <dbReference type="SAM" id="MobiDB-lite"/>
    </source>
</evidence>
<protein>
    <recommendedName>
        <fullName evidence="1">Protein X</fullName>
    </recommendedName>
    <alternativeName>
        <fullName evidence="1">HBx</fullName>
    </alternativeName>
    <alternativeName>
        <fullName evidence="1">Peptide X</fullName>
    </alternativeName>
    <alternativeName>
        <fullName evidence="1">pX</fullName>
    </alternativeName>
</protein>
<accession>Q67923</accession>
<dbReference type="EMBL" id="X97850">
    <property type="protein sequence ID" value="CAA66438.1"/>
    <property type="molecule type" value="Genomic_DNA"/>
</dbReference>
<dbReference type="SMR" id="Q67923"/>
<dbReference type="Proteomes" id="UP000007917">
    <property type="component" value="Genome"/>
</dbReference>
<dbReference type="GO" id="GO:0033650">
    <property type="term" value="C:host cell mitochondrion"/>
    <property type="evidence" value="ECO:0007669"/>
    <property type="project" value="UniProtKB-SubCell"/>
</dbReference>
<dbReference type="GO" id="GO:0042025">
    <property type="term" value="C:host cell nucleus"/>
    <property type="evidence" value="ECO:0007669"/>
    <property type="project" value="UniProtKB-SubCell"/>
</dbReference>
<dbReference type="GO" id="GO:0006351">
    <property type="term" value="P:DNA-templated transcription"/>
    <property type="evidence" value="ECO:0007669"/>
    <property type="project" value="UniProtKB-UniRule"/>
</dbReference>
<dbReference type="GO" id="GO:0085033">
    <property type="term" value="P:symbiont-mediated activation of host NF-kappaB cascade"/>
    <property type="evidence" value="ECO:0007669"/>
    <property type="project" value="UniProtKB-UniRule"/>
</dbReference>
<dbReference type="GO" id="GO:0039592">
    <property type="term" value="P:symbiont-mediated arrest of host cell cycle during G2/M transition"/>
    <property type="evidence" value="ECO:0007669"/>
    <property type="project" value="UniProtKB-UniRule"/>
</dbReference>
<dbReference type="GO" id="GO:0019079">
    <property type="term" value="P:viral genome replication"/>
    <property type="evidence" value="ECO:0007669"/>
    <property type="project" value="UniProtKB-UniRule"/>
</dbReference>
<dbReference type="HAMAP" id="MF_04074">
    <property type="entry name" value="HBV_X"/>
    <property type="match status" value="1"/>
</dbReference>
<dbReference type="InterPro" id="IPR000236">
    <property type="entry name" value="Transactivation_prot_X"/>
</dbReference>
<dbReference type="Pfam" id="PF00739">
    <property type="entry name" value="X"/>
    <property type="match status" value="1"/>
</dbReference>
<organism>
    <name type="scientific">Hepatitis B virus genotype B2 subtype adw (isolate China/patient4/1996)</name>
    <name type="common">HBV-B</name>
    <dbReference type="NCBI Taxonomy" id="489463"/>
    <lineage>
        <taxon>Viruses</taxon>
        <taxon>Riboviria</taxon>
        <taxon>Pararnavirae</taxon>
        <taxon>Artverviricota</taxon>
        <taxon>Revtraviricetes</taxon>
        <taxon>Blubervirales</taxon>
        <taxon>Hepadnaviridae</taxon>
        <taxon>Orthohepadnavirus</taxon>
        <taxon>Hepatitis B virus</taxon>
    </lineage>
</organism>
<organismHost>
    <name type="scientific">Homo sapiens</name>
    <name type="common">Human</name>
    <dbReference type="NCBI Taxonomy" id="9606"/>
</organismHost>
<organismHost>
    <name type="scientific">Pan troglodytes</name>
    <name type="common">Chimpanzee</name>
    <dbReference type="NCBI Taxonomy" id="9598"/>
</organismHost>
<gene>
    <name evidence="1" type="primary">X</name>
</gene>
<reference key="1">
    <citation type="journal article" date="1996" name="J. Viral Hepat.">
        <title>Whole genome analysis of hepatitis B virus from four cases of fulminant hepatitis: genetic variability and its potential role in disease pathogenicity.</title>
        <authorList>
            <person name="Alexopoulou A."/>
            <person name="Karayiannis P."/>
            <person name="Hadziyannis S.J."/>
        </authorList>
    </citation>
    <scope>NUCLEOTIDE SEQUENCE [GENOMIC DNA]</scope>
</reference>
<reference key="2">
    <citation type="journal article" date="2004" name="J. Virol.">
        <title>The enigmatic X gene of hepatitis B virus.</title>
        <authorList>
            <person name="Bouchard M.J."/>
            <person name="Schneider R.J."/>
        </authorList>
    </citation>
    <scope>REVIEW</scope>
</reference>
<reference key="3">
    <citation type="journal article" date="2006" name="Cancer Sci.">
        <title>Molecular functions and biological roles of hepatitis B virus x protein.</title>
        <authorList>
            <person name="Tang H."/>
            <person name="Oishi N."/>
            <person name="Kaneko S."/>
            <person name="Murakami S."/>
        </authorList>
    </citation>
    <scope>REVIEW</scope>
</reference>
<feature type="chain" id="PRO_0000319901" description="Protein X">
    <location>
        <begin position="1"/>
        <end position="154"/>
    </location>
</feature>
<feature type="region of interest" description="Disordered" evidence="2">
    <location>
        <begin position="28"/>
        <end position="48"/>
    </location>
</feature>
<feature type="region of interest" description="Mitochondrial targeting sequence" evidence="1">
    <location>
        <begin position="68"/>
        <end position="117"/>
    </location>
</feature>
<sequence>MAARVCCQLDPARDVLCLRPVGAESRGRPLPGPLGTLPPASPPAVPTDHGAHLSLRGLPVCAFSSAGPCALRFTSARRMETTVNAHGNLPKVLHKRTLGLSAMSTTDLEAYFKDCVFNEWEELGEEIRLKVFVLGGCRHKLVCSPAPCNFFTSA</sequence>
<comment type="function">
    <text evidence="1">Multifunctional protein that plays a role in silencing host antiviral defenses and promoting viral transcription. Does not seem to be essential for HBV infection. May be directly involved in development of cirrhosis and liver cancer (hepatocellular carcinoma). Most of cytosolic activities involve modulation of cytosolic calcium. The effect on apoptosis is controversial depending on the cell types in which the studies have been conducted. May induce apoptosis by localizing in mitochondria and causing loss of mitochondrial membrane potential. May also modulate apoptosis by binding host CFLAR, a key regulator of the death-inducing signaling complex (DISC). Promotes viral transcription by using the host E3 ubiquitin ligase DDB1 to target the SMC5-SMC6 complex to proteasomal degradation. This host complex would otherwise bind to viral episomal DNA, and prevents its transcription. Moderately stimulates transcription of many different viral and cellular transcription elements. Promoters and enhancers stimulated by HBx contain DNA binding sites for NF-kappa-B, AP-1, AP-2, c-EBP, ATF/CREB, or the calcium-activated factor NF-AT.</text>
</comment>
<comment type="subunit">
    <text evidence="1">May form homodimer. May interact with host CEBPA, CFLAR, CREB1, DDB1, E4F1, HBXIP, HSPD1/HSP60, NFKBIA, POLR2E and SMAD4. Interacts with host SMC5-SMC6 complex and induces its degradation. Interacts with host TRPC4AP; leading to prevent ubiquitination of TRPC4AP. Interacts with host PLSCR1; this interaction promotes ubiquitination and degradation of HBx and impairs HBx-mediated cell proliferation.</text>
</comment>
<comment type="subcellular location">
    <subcellularLocation>
        <location evidence="1">Host cytoplasm</location>
    </subcellularLocation>
    <subcellularLocation>
        <location evidence="1">Host nucleus</location>
    </subcellularLocation>
    <subcellularLocation>
        <location evidence="1">Host mitochondrion</location>
    </subcellularLocation>
    <text evidence="1">Mainly cytoplasmic as only a fraction is detected in the nucleus. In cytoplasm, a minor fraction associates with mitochondria or proteasomes.</text>
</comment>
<comment type="PTM">
    <text evidence="1">A fraction may be phosphorylated in insect cells and HepG2 cells, a human hepatoblastoma cell line. Phosphorylated in vitro by host protein kinase C or mitogen-activated protein kinase. N-acetylated in insect cells.</text>
</comment>
<comment type="similarity">
    <text evidence="1">Belongs to the orthohepadnavirus protein X family.</text>
</comment>
<comment type="caution">
    <text>Transcriptional activities should be taken with a grain of salt. As of 2007, all studies demonstrating in vivo interaction between protein X and transcriptional components were performed with significant overexpression of both proteins and in the absence of viral infection.</text>
</comment>
<name>X_HBVB6</name>
<keyword id="KW-1074">Activation of host NF-kappa-B by virus</keyword>
<keyword id="KW-0010">Activator</keyword>
<keyword id="KW-0053">Apoptosis</keyword>
<keyword id="KW-1035">Host cytoplasm</keyword>
<keyword id="KW-1079">Host G2/M cell cycle arrest by virus</keyword>
<keyword id="KW-1045">Host mitochondrion</keyword>
<keyword id="KW-1048">Host nucleus</keyword>
<keyword id="KW-0945">Host-virus interaction</keyword>
<keyword id="KW-1121">Modulation of host cell cycle by virus</keyword>
<keyword id="KW-0804">Transcription</keyword>
<keyword id="KW-0805">Transcription regulation</keyword>